<dbReference type="EC" id="2.4.99.17" evidence="1"/>
<dbReference type="EMBL" id="CP001016">
    <property type="protein sequence ID" value="ACB95949.1"/>
    <property type="molecule type" value="Genomic_DNA"/>
</dbReference>
<dbReference type="RefSeq" id="WP_012385302.1">
    <property type="nucleotide sequence ID" value="NC_010581.1"/>
</dbReference>
<dbReference type="SMR" id="B2IHG4"/>
<dbReference type="STRING" id="395963.Bind_2336"/>
<dbReference type="KEGG" id="bid:Bind_2336"/>
<dbReference type="eggNOG" id="COG0809">
    <property type="taxonomic scope" value="Bacteria"/>
</dbReference>
<dbReference type="HOGENOM" id="CLU_039110_1_1_5"/>
<dbReference type="OrthoDB" id="9805933at2"/>
<dbReference type="UniPathway" id="UPA00392"/>
<dbReference type="Proteomes" id="UP000001695">
    <property type="component" value="Chromosome"/>
</dbReference>
<dbReference type="GO" id="GO:0005737">
    <property type="term" value="C:cytoplasm"/>
    <property type="evidence" value="ECO:0007669"/>
    <property type="project" value="UniProtKB-SubCell"/>
</dbReference>
<dbReference type="GO" id="GO:0051075">
    <property type="term" value="F:S-adenosylmethionine:tRNA ribosyltransferase-isomerase activity"/>
    <property type="evidence" value="ECO:0007669"/>
    <property type="project" value="UniProtKB-EC"/>
</dbReference>
<dbReference type="GO" id="GO:0008616">
    <property type="term" value="P:queuosine biosynthetic process"/>
    <property type="evidence" value="ECO:0007669"/>
    <property type="project" value="UniProtKB-UniRule"/>
</dbReference>
<dbReference type="GO" id="GO:0002099">
    <property type="term" value="P:tRNA wobble guanine modification"/>
    <property type="evidence" value="ECO:0007669"/>
    <property type="project" value="TreeGrafter"/>
</dbReference>
<dbReference type="FunFam" id="3.40.1780.10:FF:000001">
    <property type="entry name" value="S-adenosylmethionine:tRNA ribosyltransferase-isomerase"/>
    <property type="match status" value="1"/>
</dbReference>
<dbReference type="Gene3D" id="2.40.10.240">
    <property type="entry name" value="QueA-like"/>
    <property type="match status" value="1"/>
</dbReference>
<dbReference type="Gene3D" id="3.40.1780.10">
    <property type="entry name" value="QueA-like"/>
    <property type="match status" value="1"/>
</dbReference>
<dbReference type="HAMAP" id="MF_00113">
    <property type="entry name" value="QueA"/>
    <property type="match status" value="1"/>
</dbReference>
<dbReference type="InterPro" id="IPR003699">
    <property type="entry name" value="QueA"/>
</dbReference>
<dbReference type="InterPro" id="IPR042118">
    <property type="entry name" value="QueA_dom1"/>
</dbReference>
<dbReference type="InterPro" id="IPR042119">
    <property type="entry name" value="QueA_dom2"/>
</dbReference>
<dbReference type="InterPro" id="IPR036100">
    <property type="entry name" value="QueA_sf"/>
</dbReference>
<dbReference type="NCBIfam" id="NF001140">
    <property type="entry name" value="PRK00147.1"/>
    <property type="match status" value="1"/>
</dbReference>
<dbReference type="NCBIfam" id="TIGR00113">
    <property type="entry name" value="queA"/>
    <property type="match status" value="1"/>
</dbReference>
<dbReference type="PANTHER" id="PTHR30307">
    <property type="entry name" value="S-ADENOSYLMETHIONINE:TRNA RIBOSYLTRANSFERASE-ISOMERASE"/>
    <property type="match status" value="1"/>
</dbReference>
<dbReference type="PANTHER" id="PTHR30307:SF0">
    <property type="entry name" value="S-ADENOSYLMETHIONINE:TRNA RIBOSYLTRANSFERASE-ISOMERASE"/>
    <property type="match status" value="1"/>
</dbReference>
<dbReference type="Pfam" id="PF02547">
    <property type="entry name" value="Queuosine_synth"/>
    <property type="match status" value="1"/>
</dbReference>
<dbReference type="SUPFAM" id="SSF111337">
    <property type="entry name" value="QueA-like"/>
    <property type="match status" value="1"/>
</dbReference>
<evidence type="ECO:0000255" key="1">
    <source>
        <dbReference type="HAMAP-Rule" id="MF_00113"/>
    </source>
</evidence>
<keyword id="KW-0963">Cytoplasm</keyword>
<keyword id="KW-0671">Queuosine biosynthesis</keyword>
<keyword id="KW-1185">Reference proteome</keyword>
<keyword id="KW-0949">S-adenosyl-L-methionine</keyword>
<keyword id="KW-0808">Transferase</keyword>
<reference key="1">
    <citation type="journal article" date="2010" name="J. Bacteriol.">
        <title>Complete genome sequence of Beijerinckia indica subsp. indica.</title>
        <authorList>
            <person name="Tamas I."/>
            <person name="Dedysh S.N."/>
            <person name="Liesack W."/>
            <person name="Stott M.B."/>
            <person name="Alam M."/>
            <person name="Murrell J.C."/>
            <person name="Dunfield P.F."/>
        </authorList>
    </citation>
    <scope>NUCLEOTIDE SEQUENCE [LARGE SCALE GENOMIC DNA]</scope>
    <source>
        <strain>ATCC 9039 / DSM 1715 / NCIMB 8712</strain>
    </source>
</reference>
<comment type="function">
    <text evidence="1">Transfers and isomerizes the ribose moiety from AdoMet to the 7-aminomethyl group of 7-deazaguanine (preQ1-tRNA) to give epoxyqueuosine (oQ-tRNA).</text>
</comment>
<comment type="catalytic activity">
    <reaction evidence="1">
        <text>7-aminomethyl-7-carbaguanosine(34) in tRNA + S-adenosyl-L-methionine = epoxyqueuosine(34) in tRNA + adenine + L-methionine + 2 H(+)</text>
        <dbReference type="Rhea" id="RHEA:32155"/>
        <dbReference type="Rhea" id="RHEA-COMP:10342"/>
        <dbReference type="Rhea" id="RHEA-COMP:18582"/>
        <dbReference type="ChEBI" id="CHEBI:15378"/>
        <dbReference type="ChEBI" id="CHEBI:16708"/>
        <dbReference type="ChEBI" id="CHEBI:57844"/>
        <dbReference type="ChEBI" id="CHEBI:59789"/>
        <dbReference type="ChEBI" id="CHEBI:82833"/>
        <dbReference type="ChEBI" id="CHEBI:194443"/>
        <dbReference type="EC" id="2.4.99.17"/>
    </reaction>
</comment>
<comment type="pathway">
    <text evidence="1">tRNA modification; tRNA-queuosine biosynthesis.</text>
</comment>
<comment type="subunit">
    <text evidence="1">Monomer.</text>
</comment>
<comment type="subcellular location">
    <subcellularLocation>
        <location evidence="1">Cytoplasm</location>
    </subcellularLocation>
</comment>
<comment type="similarity">
    <text evidence="1">Belongs to the QueA family.</text>
</comment>
<protein>
    <recommendedName>
        <fullName evidence="1">S-adenosylmethionine:tRNA ribosyltransferase-isomerase</fullName>
        <ecNumber evidence="1">2.4.99.17</ecNumber>
    </recommendedName>
    <alternativeName>
        <fullName evidence="1">Queuosine biosynthesis protein QueA</fullName>
    </alternativeName>
</protein>
<accession>B2IHG4</accession>
<organism>
    <name type="scientific">Beijerinckia indica subsp. indica (strain ATCC 9039 / DSM 1715 / NCIMB 8712)</name>
    <dbReference type="NCBI Taxonomy" id="395963"/>
    <lineage>
        <taxon>Bacteria</taxon>
        <taxon>Pseudomonadati</taxon>
        <taxon>Pseudomonadota</taxon>
        <taxon>Alphaproteobacteria</taxon>
        <taxon>Hyphomicrobiales</taxon>
        <taxon>Beijerinckiaceae</taxon>
        <taxon>Beijerinckia</taxon>
    </lineage>
</organism>
<proteinExistence type="inferred from homology"/>
<name>QUEA_BEII9</name>
<feature type="chain" id="PRO_1000094752" description="S-adenosylmethionine:tRNA ribosyltransferase-isomerase">
    <location>
        <begin position="1"/>
        <end position="367"/>
    </location>
</feature>
<sequence>MRVDLFDFDLPPERIALRPVEPRDASRLLVVRPDSGDMTDHGMRELPDFLRAGDVLVVNDTRVIPARLHGFRSRGESRAKIEATLHKREGEALWRAFVKPAKKLRVGETICFARQEPGTEVESLEAEVLEKGAEGEVVLGFNRAGAALDAALDLLGEMPLPPYIAGKRAPDSQDSLDYQTLFANRSGAVAAPTASLHFTPRLIAAIEARGVTICKVTLHVGAGTFLPVKAEDTDAHRMHAEWGEVSAEVAAFLNKVHAAGGRIIAAGTTSLRLLESAVDEDGLIQPFQGETSIFMTPGFRFRAVDILLTNFHLPRSTLFMLVCAFAGLETMRRAYAHAIAASYRFYSYGDACLLFRATRNTSTGAAL</sequence>
<gene>
    <name evidence="1" type="primary">queA</name>
    <name type="ordered locus">Bind_2336</name>
</gene>